<organism>
    <name type="scientific">Solanum lycopersicum</name>
    <name type="common">Tomato</name>
    <name type="synonym">Lycopersicon esculentum</name>
    <dbReference type="NCBI Taxonomy" id="4081"/>
    <lineage>
        <taxon>Eukaryota</taxon>
        <taxon>Viridiplantae</taxon>
        <taxon>Streptophyta</taxon>
        <taxon>Embryophyta</taxon>
        <taxon>Tracheophyta</taxon>
        <taxon>Spermatophyta</taxon>
        <taxon>Magnoliopsida</taxon>
        <taxon>eudicotyledons</taxon>
        <taxon>Gunneridae</taxon>
        <taxon>Pentapetalae</taxon>
        <taxon>asterids</taxon>
        <taxon>lamiids</taxon>
        <taxon>Solanales</taxon>
        <taxon>Solanaceae</taxon>
        <taxon>Solanoideae</taxon>
        <taxon>Solaneae</taxon>
        <taxon>Solanum</taxon>
        <taxon>Solanum subgen. Lycopersicon</taxon>
    </lineage>
</organism>
<keyword id="KW-0460">Magnesium</keyword>
<keyword id="KW-0479">Metal-binding</keyword>
<keyword id="KW-1185">Reference proteome</keyword>
<evidence type="ECO:0000250" key="1">
    <source>
        <dbReference type="UniProtKB" id="A0A1C9J6A7"/>
    </source>
</evidence>
<evidence type="ECO:0000250" key="2">
    <source>
        <dbReference type="UniProtKB" id="Q40577"/>
    </source>
</evidence>
<evidence type="ECO:0000269" key="3">
    <source>
    </source>
</evidence>
<evidence type="ECO:0000269" key="4">
    <source>
    </source>
</evidence>
<evidence type="ECO:0000303" key="5">
    <source>
    </source>
</evidence>
<evidence type="ECO:0000303" key="6">
    <source>
    </source>
</evidence>
<evidence type="ECO:0000305" key="7"/>
<sequence>MELCTQTVPADHEVEITRRVGSHHPTVWGDHFLAYANLSGASEEEEKQHEDLKEEVRKMLVMAPSNALEKLELINTIQCLGVAYHFEHEIESYMCTHYEEYWIGDLHAIALCFRLLRQQGYRVSCDAYKKFTDDQGNFKIELINDVHGMLSLYEAAQFRVHGEEILDEALNFTTTQLKLILPKLSNSPLAQQVANALKFPIKDGIVRVEARKYISFYQQNQNHNQLLLNFAKLDFNILQMLHKKELCDITRWWKELEIVKTLPYVRDRLAEVYFWSLGVYFEPQYSTARKILTKNISMISLIDDTYDIYGTLDELTLFTEAIERWNIDASEQLQLPSYMKIIYCGLLDVYDEIKKDLANENKSFLINYSIIEMKKMVMAYFQEAKWYYGKTIPKMEEYMKNGISTSAYVQIATTSWLGMGNVATKDSFDWIVNEPPILVASSIIARLLNDLLSHEEEQKRGDAPSGVECYMKEYGVTKEEAHIKIRNTIENSWKDLYEEYFKVNGTIIPRVLLMCIINLARVIEFIYKDEDAYTFPKNNLKDVIYRILIDPII</sequence>
<reference key="1">
    <citation type="journal article" date="2011" name="Plant Mol. Biol.">
        <title>RNA-seq discovery, functional characterization, and comparison of sesquiterpene synthases from Solanum lycopersicum and Solanum habrochaites trichomes.</title>
        <authorList>
            <person name="Bleeker P.M."/>
            <person name="Spyropoulou E.A."/>
            <person name="Diergaarde P.J."/>
            <person name="Volpin H."/>
            <person name="De Both M.T.J."/>
            <person name="Zerbe P."/>
            <person name="Bohlmann J."/>
            <person name="Falara V."/>
            <person name="Matsuba Y."/>
            <person name="Pichersky E."/>
            <person name="Haring M.A."/>
            <person name="Schuurink R.C."/>
        </authorList>
    </citation>
    <scope>NUCLEOTIDE SEQUENCE [MRNA]</scope>
    <scope>PATHWAY</scope>
    <scope>GENE FAMILY</scope>
    <source>
        <strain>cv. Moneymaker</strain>
    </source>
</reference>
<reference key="2">
    <citation type="journal article" date="2011" name="Plant Physiol.">
        <title>The tomato terpene synthase gene family.</title>
        <authorList>
            <person name="Falara V."/>
            <person name="Akhtar T.A."/>
            <person name="Nguyen T.T.H."/>
            <person name="Spyropoulou E.A."/>
            <person name="Bleeker P.M."/>
            <person name="Schauvinhold I."/>
            <person name="Matsuba Y."/>
            <person name="Bonini M.E."/>
            <person name="Schilmiller A.L."/>
            <person name="Last R.L."/>
            <person name="Schuurink R.C."/>
            <person name="Pichersky E."/>
        </authorList>
    </citation>
    <scope>NUCLEOTIDE SEQUENCE [GENOMIC DNA]</scope>
    <scope>TISSUE SPECIFICITY</scope>
    <scope>GENE FAMILY</scope>
    <source>
        <strain>cv. M82</strain>
    </source>
</reference>
<feature type="chain" id="PRO_0000454693" description="Terpene synthase 16">
    <location>
        <begin position="1"/>
        <end position="553"/>
    </location>
</feature>
<feature type="short sequence motif" description="DDXXD motif" evidence="1">
    <location>
        <begin position="303"/>
        <end position="307"/>
    </location>
</feature>
<feature type="binding site" evidence="2">
    <location>
        <position position="303"/>
    </location>
    <ligand>
        <name>Mg(2+)</name>
        <dbReference type="ChEBI" id="CHEBI:18420"/>
        <label>1</label>
    </ligand>
</feature>
<feature type="binding site" evidence="2">
    <location>
        <position position="303"/>
    </location>
    <ligand>
        <name>Mg(2+)</name>
        <dbReference type="ChEBI" id="CHEBI:18420"/>
        <label>2</label>
    </ligand>
</feature>
<feature type="binding site" evidence="2">
    <location>
        <position position="307"/>
    </location>
    <ligand>
        <name>Mg(2+)</name>
        <dbReference type="ChEBI" id="CHEBI:18420"/>
        <label>1</label>
    </ligand>
</feature>
<feature type="binding site" evidence="2">
    <location>
        <position position="307"/>
    </location>
    <ligand>
        <name>Mg(2+)</name>
        <dbReference type="ChEBI" id="CHEBI:18420"/>
        <label>2</label>
    </ligand>
</feature>
<feature type="binding site" evidence="2">
    <location>
        <position position="457"/>
    </location>
    <ligand>
        <name>Mg(2+)</name>
        <dbReference type="ChEBI" id="CHEBI:18420"/>
        <label>3</label>
    </ligand>
</feature>
<feature type="sequence conflict" description="In Ref. 2; AEP82781." evidence="7" ref="2">
    <original>G</original>
    <variation>D</variation>
    <location>
        <position position="104"/>
    </location>
</feature>
<feature type="sequence conflict" description="In Ref. 2; AEP82781." evidence="7" ref="2">
    <original>E</original>
    <variation>Q</variation>
    <location>
        <position position="331"/>
    </location>
</feature>
<feature type="sequence conflict" description="In Ref. 2; AEP82781." evidence="7" ref="2">
    <original>N</original>
    <variation>S</variation>
    <location>
        <position position="401"/>
    </location>
</feature>
<feature type="sequence conflict" description="In Ref. 2; AEP82781." evidence="7" ref="2">
    <original>I</original>
    <variation>V</variation>
    <location>
        <position position="411"/>
    </location>
</feature>
<name>TPS16_SOLLC</name>
<proteinExistence type="evidence at transcript level"/>
<accession>G8H5N3</accession>
<accession>G5CV53</accession>
<comment type="function">
    <text evidence="4">Sesquiterpene synthase involved in the biosynthesis of volatile compounds (PubMed:21818683). No activity detected with geranyl diphosphate (GPP) and farnesyl diphosphate (FPP) as substrates (PubMed:21818683).</text>
</comment>
<comment type="cofactor">
    <cofactor evidence="1">
        <name>Mg(2+)</name>
        <dbReference type="ChEBI" id="CHEBI:18420"/>
    </cofactor>
    <cofactor evidence="1">
        <name>Mn(2+)</name>
        <dbReference type="ChEBI" id="CHEBI:29035"/>
    </cofactor>
    <text evidence="1">Binds 3 Mg(2+) or Mn(2+) ions per subunit.</text>
</comment>
<comment type="pathway">
    <text evidence="4">Secondary metabolite biosynthesis; terpenoid biosynthesis.</text>
</comment>
<comment type="tissue specificity">
    <text evidence="3">Expressed in leaves, trichomes and flowers.</text>
</comment>
<comment type="domain">
    <text evidence="2">The Asp-Asp-Xaa-Xaa-Asp/Glu (DDXXD/E) motif is important for the catalytic activity, presumably through binding to Mg(2+).</text>
</comment>
<comment type="similarity">
    <text evidence="7">Belongs to the terpene synthase family. Tpsa subfamily.</text>
</comment>
<protein>
    <recommendedName>
        <fullName evidence="5 6">Terpene synthase 16</fullName>
        <shortName evidence="5 6">SlTPS16</shortName>
    </recommendedName>
</protein>
<dbReference type="EMBL" id="JN402394">
    <property type="protein sequence ID" value="AEM23831.1"/>
    <property type="molecule type" value="mRNA"/>
</dbReference>
<dbReference type="EMBL" id="JN412090">
    <property type="protein sequence ID" value="AEP82781.1"/>
    <property type="molecule type" value="Genomic_DNA"/>
</dbReference>
<dbReference type="RefSeq" id="NP_001239042.2">
    <property type="nucleotide sequence ID" value="NM_001252113.2"/>
</dbReference>
<dbReference type="SMR" id="G8H5N3"/>
<dbReference type="GeneID" id="100820703"/>
<dbReference type="InParanoid" id="G8H5N3"/>
<dbReference type="OrthoDB" id="1877784at2759"/>
<dbReference type="UniPathway" id="UPA00213"/>
<dbReference type="Proteomes" id="UP000004994">
    <property type="component" value="Unplaced"/>
</dbReference>
<dbReference type="ExpressionAtlas" id="G8H5N3">
    <property type="expression patterns" value="baseline and differential"/>
</dbReference>
<dbReference type="GO" id="GO:0000287">
    <property type="term" value="F:magnesium ion binding"/>
    <property type="evidence" value="ECO:0007669"/>
    <property type="project" value="InterPro"/>
</dbReference>
<dbReference type="GO" id="GO:0010333">
    <property type="term" value="F:terpene synthase activity"/>
    <property type="evidence" value="ECO:0007669"/>
    <property type="project" value="InterPro"/>
</dbReference>
<dbReference type="GO" id="GO:0016102">
    <property type="term" value="P:diterpenoid biosynthetic process"/>
    <property type="evidence" value="ECO:0007669"/>
    <property type="project" value="InterPro"/>
</dbReference>
<dbReference type="CDD" id="cd00684">
    <property type="entry name" value="Terpene_cyclase_plant_C1"/>
    <property type="match status" value="1"/>
</dbReference>
<dbReference type="FunFam" id="1.10.600.10:FF:000007">
    <property type="entry name" value="Isoprene synthase, chloroplastic"/>
    <property type="match status" value="1"/>
</dbReference>
<dbReference type="FunFam" id="1.50.10.130:FF:000001">
    <property type="entry name" value="Isoprene synthase, chloroplastic"/>
    <property type="match status" value="1"/>
</dbReference>
<dbReference type="Gene3D" id="1.10.600.10">
    <property type="entry name" value="Farnesyl Diphosphate Synthase"/>
    <property type="match status" value="1"/>
</dbReference>
<dbReference type="Gene3D" id="1.50.10.130">
    <property type="entry name" value="Terpene synthase, N-terminal domain"/>
    <property type="match status" value="1"/>
</dbReference>
<dbReference type="InterPro" id="IPR008949">
    <property type="entry name" value="Isoprenoid_synthase_dom_sf"/>
</dbReference>
<dbReference type="InterPro" id="IPR034741">
    <property type="entry name" value="Terpene_cyclase-like_1_C"/>
</dbReference>
<dbReference type="InterPro" id="IPR044814">
    <property type="entry name" value="Terpene_cyclase_plant_C1"/>
</dbReference>
<dbReference type="InterPro" id="IPR001906">
    <property type="entry name" value="Terpene_synth_N"/>
</dbReference>
<dbReference type="InterPro" id="IPR036965">
    <property type="entry name" value="Terpene_synth_N_sf"/>
</dbReference>
<dbReference type="InterPro" id="IPR050148">
    <property type="entry name" value="Terpene_synthase-like"/>
</dbReference>
<dbReference type="InterPro" id="IPR005630">
    <property type="entry name" value="Terpene_synthase_metal-bd"/>
</dbReference>
<dbReference type="InterPro" id="IPR008930">
    <property type="entry name" value="Terpenoid_cyclase/PrenylTrfase"/>
</dbReference>
<dbReference type="PANTHER" id="PTHR31225">
    <property type="entry name" value="OS04G0344100 PROTEIN-RELATED"/>
    <property type="match status" value="1"/>
</dbReference>
<dbReference type="PANTHER" id="PTHR31225:SF143">
    <property type="entry name" value="TERPENE SYNTHASE 16"/>
    <property type="match status" value="1"/>
</dbReference>
<dbReference type="Pfam" id="PF01397">
    <property type="entry name" value="Terpene_synth"/>
    <property type="match status" value="1"/>
</dbReference>
<dbReference type="Pfam" id="PF03936">
    <property type="entry name" value="Terpene_synth_C"/>
    <property type="match status" value="1"/>
</dbReference>
<dbReference type="SFLD" id="SFLDS00005">
    <property type="entry name" value="Isoprenoid_Synthase_Type_I"/>
    <property type="match status" value="1"/>
</dbReference>
<dbReference type="SFLD" id="SFLDG01019">
    <property type="entry name" value="Terpene_Cyclase_Like_1_C_Termi"/>
    <property type="match status" value="1"/>
</dbReference>
<dbReference type="SUPFAM" id="SSF48239">
    <property type="entry name" value="Terpenoid cyclases/Protein prenyltransferases"/>
    <property type="match status" value="1"/>
</dbReference>
<dbReference type="SUPFAM" id="SSF48576">
    <property type="entry name" value="Terpenoid synthases"/>
    <property type="match status" value="1"/>
</dbReference>
<gene>
    <name evidence="5 6" type="primary">TPS16</name>
</gene>